<sequence>MLDKLLRLGEGRMVKRLKKVADYVNTLSDDVEKLSDAELRAKTDEFRKRIDGGEDLDDLLPEAFAVAREAAWRVLSQRHFDVQVMGGAALHFGNVAEMKTGEGKTLTCVLPAYLNALSGKGVHVVTVNDYLAKRDAEWMGRVHRFLGLDVGVILSGLTPDERRAAYHADITYGTNNEFGFDYLRDNMAHRLEDRVQRGHNFAVVDEVDSILIDEARTPLIISGPADAASNWYSEFARLAPLMEKDVHYEVDLRKRTVGVHEVGVEFVEDQLGIENLYEAANSPLVSYLNNALKAKELFQRDKDYIVRNGEVLIVDEFTGRVLLGRRYNEGMHQAIEAKEHVEIKAENQTLATITLQNYFRLYDKLAGMTGTAQTEAAELHEIYKLGVVPIPTNRDMIRQDQTDLIYKTEEAKFIAVVDDVYERYEKGQPVLIGTTSVERSEYLSKQFTKRKIPHNVLNAKYHEQEANIIAEAGRLGAITVATNMAGRGTDIVLGGNVDFLADKRLREQGLDPVETPEEYEAAWESTLNQIKAEAEEEADDVRAVGGLYVLGTERHESRRIDNQLRGRSGRQGDPGESRFYLSLGDELMRRFNGATLEALLTRLNLPDDVPIEAKMVTRAIKSAQTQVEQQNFEVRKNVLKYDEVMNQQRKVIYEERRRILEGEDLAEQAHKMLVDVVTAYVNGATAEGYAEDWDLEQLWTALKQLYPVGIDYHDLVDSDAVGEAGELTREELLDMLIKDAERAYAERERELEELAGEGAMRQLERNVLLNVIDRKWREHLYEMDYLKEGIGLRAMAQRDPLVEYQREGYDMFVGMLEALKEESVGFLFNVTVEAAPAAPSNRVAPVAAPPGLSEFAAAAAKAQEQTGQGAVATKERETPAPTLRAKGIDNDDTPPLTYVGPGEDGSAEVQRSNGGPRHAAPGGATRRERREAARKQAKTSKPTRRRG</sequence>
<name>SECA1_MYCSS</name>
<reference key="1">
    <citation type="submission" date="2006-06" db="EMBL/GenBank/DDBJ databases">
        <title>Complete sequence of chromosome of Mycobacterium sp. MCS.</title>
        <authorList>
            <consortium name="US DOE Joint Genome Institute"/>
            <person name="Copeland A."/>
            <person name="Lucas S."/>
            <person name="Lapidus A."/>
            <person name="Barry K."/>
            <person name="Detter J.C."/>
            <person name="Glavina del Rio T."/>
            <person name="Hammon N."/>
            <person name="Israni S."/>
            <person name="Dalin E."/>
            <person name="Tice H."/>
            <person name="Pitluck S."/>
            <person name="Martinez M."/>
            <person name="Schmutz J."/>
            <person name="Larimer F."/>
            <person name="Land M."/>
            <person name="Hauser L."/>
            <person name="Kyrpides N."/>
            <person name="Kim E."/>
            <person name="Miller C.D."/>
            <person name="Hughes J.E."/>
            <person name="Anderson A.J."/>
            <person name="Sims R.C."/>
            <person name="Richardson P."/>
        </authorList>
    </citation>
    <scope>NUCLEOTIDE SEQUENCE [LARGE SCALE GENOMIC DNA]</scope>
    <source>
        <strain>MCS</strain>
    </source>
</reference>
<protein>
    <recommendedName>
        <fullName evidence="1">Protein translocase subunit SecA 1</fullName>
        <ecNumber evidence="1">7.4.2.8</ecNumber>
    </recommendedName>
</protein>
<feature type="chain" id="PRO_0000318388" description="Protein translocase subunit SecA 1">
    <location>
        <begin position="1"/>
        <end position="947"/>
    </location>
</feature>
<feature type="region of interest" description="Disordered" evidence="2">
    <location>
        <begin position="860"/>
        <end position="947"/>
    </location>
</feature>
<feature type="compositionally biased region" description="Basic and acidic residues" evidence="2">
    <location>
        <begin position="925"/>
        <end position="934"/>
    </location>
</feature>
<feature type="compositionally biased region" description="Basic residues" evidence="2">
    <location>
        <begin position="935"/>
        <end position="947"/>
    </location>
</feature>
<feature type="binding site" evidence="1">
    <location>
        <position position="83"/>
    </location>
    <ligand>
        <name>ATP</name>
        <dbReference type="ChEBI" id="CHEBI:30616"/>
    </ligand>
</feature>
<feature type="binding site" evidence="1">
    <location>
        <begin position="101"/>
        <end position="105"/>
    </location>
    <ligand>
        <name>ATP</name>
        <dbReference type="ChEBI" id="CHEBI:30616"/>
    </ligand>
</feature>
<feature type="binding site" evidence="1">
    <location>
        <position position="490"/>
    </location>
    <ligand>
        <name>ATP</name>
        <dbReference type="ChEBI" id="CHEBI:30616"/>
    </ligand>
</feature>
<dbReference type="EC" id="7.4.2.8" evidence="1"/>
<dbReference type="EMBL" id="CP000384">
    <property type="protein sequence ID" value="ABG07465.1"/>
    <property type="molecule type" value="Genomic_DNA"/>
</dbReference>
<dbReference type="SMR" id="Q1BCB9"/>
<dbReference type="KEGG" id="mmc:Mmcs_1353"/>
<dbReference type="HOGENOM" id="CLU_005314_3_0_11"/>
<dbReference type="BioCyc" id="MSP164756:G1G6O-1381-MONOMER"/>
<dbReference type="GO" id="GO:0031522">
    <property type="term" value="C:cell envelope Sec protein transport complex"/>
    <property type="evidence" value="ECO:0007669"/>
    <property type="project" value="TreeGrafter"/>
</dbReference>
<dbReference type="GO" id="GO:0005829">
    <property type="term" value="C:cytosol"/>
    <property type="evidence" value="ECO:0007669"/>
    <property type="project" value="TreeGrafter"/>
</dbReference>
<dbReference type="GO" id="GO:0005886">
    <property type="term" value="C:plasma membrane"/>
    <property type="evidence" value="ECO:0007669"/>
    <property type="project" value="UniProtKB-SubCell"/>
</dbReference>
<dbReference type="GO" id="GO:0005524">
    <property type="term" value="F:ATP binding"/>
    <property type="evidence" value="ECO:0007669"/>
    <property type="project" value="UniProtKB-UniRule"/>
</dbReference>
<dbReference type="GO" id="GO:0008564">
    <property type="term" value="F:protein-exporting ATPase activity"/>
    <property type="evidence" value="ECO:0007669"/>
    <property type="project" value="UniProtKB-EC"/>
</dbReference>
<dbReference type="GO" id="GO:0065002">
    <property type="term" value="P:intracellular protein transmembrane transport"/>
    <property type="evidence" value="ECO:0007669"/>
    <property type="project" value="UniProtKB-UniRule"/>
</dbReference>
<dbReference type="GO" id="GO:0017038">
    <property type="term" value="P:protein import"/>
    <property type="evidence" value="ECO:0007669"/>
    <property type="project" value="InterPro"/>
</dbReference>
<dbReference type="GO" id="GO:0006605">
    <property type="term" value="P:protein targeting"/>
    <property type="evidence" value="ECO:0007669"/>
    <property type="project" value="UniProtKB-UniRule"/>
</dbReference>
<dbReference type="GO" id="GO:0043952">
    <property type="term" value="P:protein transport by the Sec complex"/>
    <property type="evidence" value="ECO:0007669"/>
    <property type="project" value="TreeGrafter"/>
</dbReference>
<dbReference type="CDD" id="cd17928">
    <property type="entry name" value="DEXDc_SecA"/>
    <property type="match status" value="1"/>
</dbReference>
<dbReference type="CDD" id="cd18803">
    <property type="entry name" value="SF2_C_secA"/>
    <property type="match status" value="1"/>
</dbReference>
<dbReference type="FunFam" id="1.10.3060.10:FF:000002">
    <property type="entry name" value="Preprotein translocase subunit SecA"/>
    <property type="match status" value="1"/>
</dbReference>
<dbReference type="FunFam" id="3.40.50.300:FF:000113">
    <property type="entry name" value="Preprotein translocase subunit SecA"/>
    <property type="match status" value="1"/>
</dbReference>
<dbReference type="FunFam" id="3.40.50.300:FF:000334">
    <property type="entry name" value="Protein translocase subunit SecA"/>
    <property type="match status" value="1"/>
</dbReference>
<dbReference type="FunFam" id="3.90.1440.10:FF:000002">
    <property type="entry name" value="Protein translocase subunit SecA"/>
    <property type="match status" value="1"/>
</dbReference>
<dbReference type="Gene3D" id="1.10.3060.10">
    <property type="entry name" value="Helical scaffold and wing domains of SecA"/>
    <property type="match status" value="1"/>
</dbReference>
<dbReference type="Gene3D" id="3.40.50.300">
    <property type="entry name" value="P-loop containing nucleotide triphosphate hydrolases"/>
    <property type="match status" value="2"/>
</dbReference>
<dbReference type="Gene3D" id="3.90.1440.10">
    <property type="entry name" value="SecA, preprotein cross-linking domain"/>
    <property type="match status" value="1"/>
</dbReference>
<dbReference type="HAMAP" id="MF_01382">
    <property type="entry name" value="SecA"/>
    <property type="match status" value="1"/>
</dbReference>
<dbReference type="InterPro" id="IPR014001">
    <property type="entry name" value="Helicase_ATP-bd"/>
</dbReference>
<dbReference type="InterPro" id="IPR001650">
    <property type="entry name" value="Helicase_C-like"/>
</dbReference>
<dbReference type="InterPro" id="IPR027417">
    <property type="entry name" value="P-loop_NTPase"/>
</dbReference>
<dbReference type="InterPro" id="IPR000185">
    <property type="entry name" value="SecA"/>
</dbReference>
<dbReference type="InterPro" id="IPR020937">
    <property type="entry name" value="SecA_CS"/>
</dbReference>
<dbReference type="InterPro" id="IPR011115">
    <property type="entry name" value="SecA_DEAD"/>
</dbReference>
<dbReference type="InterPro" id="IPR014018">
    <property type="entry name" value="SecA_motor_DEAD"/>
</dbReference>
<dbReference type="InterPro" id="IPR011130">
    <property type="entry name" value="SecA_preprotein_X-link_dom"/>
</dbReference>
<dbReference type="InterPro" id="IPR044722">
    <property type="entry name" value="SecA_SF2_C"/>
</dbReference>
<dbReference type="InterPro" id="IPR011116">
    <property type="entry name" value="SecA_Wing/Scaffold"/>
</dbReference>
<dbReference type="InterPro" id="IPR036266">
    <property type="entry name" value="SecA_Wing/Scaffold_sf"/>
</dbReference>
<dbReference type="InterPro" id="IPR036670">
    <property type="entry name" value="SecA_X-link_sf"/>
</dbReference>
<dbReference type="NCBIfam" id="NF009538">
    <property type="entry name" value="PRK12904.1"/>
    <property type="match status" value="1"/>
</dbReference>
<dbReference type="NCBIfam" id="TIGR00963">
    <property type="entry name" value="secA"/>
    <property type="match status" value="1"/>
</dbReference>
<dbReference type="PANTHER" id="PTHR30612:SF0">
    <property type="entry name" value="CHLOROPLAST PROTEIN-TRANSPORTING ATPASE"/>
    <property type="match status" value="1"/>
</dbReference>
<dbReference type="PANTHER" id="PTHR30612">
    <property type="entry name" value="SECA INNER MEMBRANE COMPONENT OF SEC PROTEIN SECRETION SYSTEM"/>
    <property type="match status" value="1"/>
</dbReference>
<dbReference type="Pfam" id="PF21090">
    <property type="entry name" value="P-loop_SecA"/>
    <property type="match status" value="1"/>
</dbReference>
<dbReference type="Pfam" id="PF07517">
    <property type="entry name" value="SecA_DEAD"/>
    <property type="match status" value="1"/>
</dbReference>
<dbReference type="Pfam" id="PF01043">
    <property type="entry name" value="SecA_PP_bind"/>
    <property type="match status" value="1"/>
</dbReference>
<dbReference type="Pfam" id="PF07516">
    <property type="entry name" value="SecA_SW"/>
    <property type="match status" value="1"/>
</dbReference>
<dbReference type="PRINTS" id="PR00906">
    <property type="entry name" value="SECA"/>
</dbReference>
<dbReference type="SMART" id="SM00957">
    <property type="entry name" value="SecA_DEAD"/>
    <property type="match status" value="1"/>
</dbReference>
<dbReference type="SMART" id="SM00958">
    <property type="entry name" value="SecA_PP_bind"/>
    <property type="match status" value="1"/>
</dbReference>
<dbReference type="SUPFAM" id="SSF81886">
    <property type="entry name" value="Helical scaffold and wing domains of SecA"/>
    <property type="match status" value="1"/>
</dbReference>
<dbReference type="SUPFAM" id="SSF52540">
    <property type="entry name" value="P-loop containing nucleoside triphosphate hydrolases"/>
    <property type="match status" value="2"/>
</dbReference>
<dbReference type="SUPFAM" id="SSF81767">
    <property type="entry name" value="Pre-protein crosslinking domain of SecA"/>
    <property type="match status" value="1"/>
</dbReference>
<dbReference type="PROSITE" id="PS01312">
    <property type="entry name" value="SECA"/>
    <property type="match status" value="1"/>
</dbReference>
<dbReference type="PROSITE" id="PS51196">
    <property type="entry name" value="SECA_MOTOR_DEAD"/>
    <property type="match status" value="1"/>
</dbReference>
<proteinExistence type="inferred from homology"/>
<organism>
    <name type="scientific">Mycobacterium sp. (strain MCS)</name>
    <dbReference type="NCBI Taxonomy" id="164756"/>
    <lineage>
        <taxon>Bacteria</taxon>
        <taxon>Bacillati</taxon>
        <taxon>Actinomycetota</taxon>
        <taxon>Actinomycetes</taxon>
        <taxon>Mycobacteriales</taxon>
        <taxon>Mycobacteriaceae</taxon>
        <taxon>Mycobacterium</taxon>
    </lineage>
</organism>
<accession>Q1BCB9</accession>
<gene>
    <name evidence="1" type="primary">secA1</name>
    <name type="ordered locus">Mmcs_1353</name>
</gene>
<comment type="function">
    <text evidence="1">Part of the Sec protein translocase complex. Interacts with the SecYEG preprotein conducting channel. Has a central role in coupling the hydrolysis of ATP to the transfer of proteins into and across the cell membrane, serving as an ATP-driven molecular motor driving the stepwise translocation of polypeptide chains across the membrane.</text>
</comment>
<comment type="catalytic activity">
    <reaction evidence="1">
        <text>ATP + H2O + cellular proteinSide 1 = ADP + phosphate + cellular proteinSide 2.</text>
        <dbReference type="EC" id="7.4.2.8"/>
    </reaction>
</comment>
<comment type="subunit">
    <text evidence="1">Monomer and homodimer. Part of the essential Sec protein translocation apparatus which comprises SecA, SecYEG and auxiliary proteins SecDF. Other proteins may also be involved.</text>
</comment>
<comment type="subcellular location">
    <subcellularLocation>
        <location evidence="1">Cell membrane</location>
        <topology evidence="1">Peripheral membrane protein</topology>
        <orientation evidence="1">Cytoplasmic side</orientation>
    </subcellularLocation>
    <subcellularLocation>
        <location evidence="1">Cytoplasm</location>
    </subcellularLocation>
    <text evidence="1">Distribution is 50-50.</text>
</comment>
<comment type="similarity">
    <text evidence="1">Belongs to the SecA family.</text>
</comment>
<keyword id="KW-0067">ATP-binding</keyword>
<keyword id="KW-1003">Cell membrane</keyword>
<keyword id="KW-0963">Cytoplasm</keyword>
<keyword id="KW-0472">Membrane</keyword>
<keyword id="KW-0547">Nucleotide-binding</keyword>
<keyword id="KW-0653">Protein transport</keyword>
<keyword id="KW-1278">Translocase</keyword>
<keyword id="KW-0811">Translocation</keyword>
<keyword id="KW-0813">Transport</keyword>
<evidence type="ECO:0000255" key="1">
    <source>
        <dbReference type="HAMAP-Rule" id="MF_01382"/>
    </source>
</evidence>
<evidence type="ECO:0000256" key="2">
    <source>
        <dbReference type="SAM" id="MobiDB-lite"/>
    </source>
</evidence>